<dbReference type="EMBL" id="CP000964">
    <property type="protein sequence ID" value="ACI11138.1"/>
    <property type="molecule type" value="Genomic_DNA"/>
</dbReference>
<dbReference type="KEGG" id="kpe:KPK_3195"/>
<dbReference type="HOGENOM" id="CLU_073287_0_0_6"/>
<dbReference type="BioCyc" id="KPNE507522:GI0B-3181-MONOMER"/>
<dbReference type="Proteomes" id="UP000001734">
    <property type="component" value="Chromosome"/>
</dbReference>
<dbReference type="GO" id="GO:0005886">
    <property type="term" value="C:plasma membrane"/>
    <property type="evidence" value="ECO:0007669"/>
    <property type="project" value="UniProtKB-SubCell"/>
</dbReference>
<dbReference type="HAMAP" id="MF_01067">
    <property type="entry name" value="UPF0259"/>
    <property type="match status" value="1"/>
</dbReference>
<dbReference type="InterPro" id="IPR009627">
    <property type="entry name" value="UPF0259"/>
</dbReference>
<dbReference type="NCBIfam" id="NF002774">
    <property type="entry name" value="PRK02868.1"/>
    <property type="match status" value="1"/>
</dbReference>
<dbReference type="Pfam" id="PF06790">
    <property type="entry name" value="UPF0259"/>
    <property type="match status" value="1"/>
</dbReference>
<comment type="subcellular location">
    <subcellularLocation>
        <location evidence="1">Cell inner membrane</location>
        <topology evidence="1">Multi-pass membrane protein</topology>
    </subcellularLocation>
</comment>
<comment type="similarity">
    <text evidence="1">Belongs to the UPF0259 family.</text>
</comment>
<reference key="1">
    <citation type="journal article" date="2008" name="PLoS Genet.">
        <title>Complete genome sequence of the N2-fixing broad host range endophyte Klebsiella pneumoniae 342 and virulence predictions verified in mice.</title>
        <authorList>
            <person name="Fouts D.E."/>
            <person name="Tyler H.L."/>
            <person name="DeBoy R.T."/>
            <person name="Daugherty S."/>
            <person name="Ren Q."/>
            <person name="Badger J.H."/>
            <person name="Durkin A.S."/>
            <person name="Huot H."/>
            <person name="Shrivastava S."/>
            <person name="Kothari S."/>
            <person name="Dodson R.J."/>
            <person name="Mohamoud Y."/>
            <person name="Khouri H."/>
            <person name="Roesch L.F.W."/>
            <person name="Krogfelt K.A."/>
            <person name="Struve C."/>
            <person name="Triplett E.W."/>
            <person name="Methe B.A."/>
        </authorList>
    </citation>
    <scope>NUCLEOTIDE SEQUENCE [LARGE SCALE GENOMIC DNA]</scope>
    <source>
        <strain>342</strain>
    </source>
</reference>
<proteinExistence type="inferred from homology"/>
<sequence>MSITAKSVYRDTGNFFRNQFITILLIALLCAFITVVLGHAFSPSDEQLSILSEGDNLAGSAGLFELVQNMTPEQQQVLLRASAASTFSGLVGNAILAGGVLLLIQLVSAGHRVSALRAIGASAPVLPKLLLLILFTTFLVQMGMMLVLVPGVLLAIVLAFAPIMLVQDKMGILSAMRSSMRLAWANLRLVAPAIIGWLVAKTLLLLFASSFAVLTPNVGAVVINTISNLISALLLIYLFRVYMLIRN</sequence>
<gene>
    <name type="ordered locus">KPK_3195</name>
</gene>
<name>Y3195_KLEP3</name>
<evidence type="ECO:0000255" key="1">
    <source>
        <dbReference type="HAMAP-Rule" id="MF_01067"/>
    </source>
</evidence>
<organism>
    <name type="scientific">Klebsiella pneumoniae (strain 342)</name>
    <dbReference type="NCBI Taxonomy" id="507522"/>
    <lineage>
        <taxon>Bacteria</taxon>
        <taxon>Pseudomonadati</taxon>
        <taxon>Pseudomonadota</taxon>
        <taxon>Gammaproteobacteria</taxon>
        <taxon>Enterobacterales</taxon>
        <taxon>Enterobacteriaceae</taxon>
        <taxon>Klebsiella/Raoultella group</taxon>
        <taxon>Klebsiella</taxon>
        <taxon>Klebsiella pneumoniae complex</taxon>
    </lineage>
</organism>
<protein>
    <recommendedName>
        <fullName evidence="1">UPF0259 membrane protein KPK_3195</fullName>
    </recommendedName>
</protein>
<accession>B5XT15</accession>
<feature type="chain" id="PRO_1000136587" description="UPF0259 membrane protein KPK_3195">
    <location>
        <begin position="1"/>
        <end position="247"/>
    </location>
</feature>
<feature type="transmembrane region" description="Helical" evidence="1">
    <location>
        <begin position="20"/>
        <end position="40"/>
    </location>
</feature>
<feature type="transmembrane region" description="Helical" evidence="1">
    <location>
        <begin position="87"/>
        <end position="107"/>
    </location>
</feature>
<feature type="transmembrane region" description="Helical" evidence="1">
    <location>
        <begin position="119"/>
        <end position="139"/>
    </location>
</feature>
<feature type="transmembrane region" description="Helical" evidence="1">
    <location>
        <begin position="146"/>
        <end position="166"/>
    </location>
</feature>
<feature type="transmembrane region" description="Helical" evidence="1">
    <location>
        <begin position="194"/>
        <end position="214"/>
    </location>
</feature>
<feature type="transmembrane region" description="Helical" evidence="1">
    <location>
        <begin position="219"/>
        <end position="239"/>
    </location>
</feature>
<keyword id="KW-0997">Cell inner membrane</keyword>
<keyword id="KW-1003">Cell membrane</keyword>
<keyword id="KW-0472">Membrane</keyword>
<keyword id="KW-0812">Transmembrane</keyword>
<keyword id="KW-1133">Transmembrane helix</keyword>